<feature type="chain" id="PRO_0000424236" description="D-glycero-beta-D-manno-heptose-1,7-bisphosphate 7-phosphatase">
    <location>
        <begin position="1"/>
        <end position="217"/>
    </location>
</feature>
<feature type="active site" description="Nucleophile" evidence="1">
    <location>
        <position position="36"/>
    </location>
</feature>
<feature type="active site" description="Proton donor" evidence="1">
    <location>
        <position position="38"/>
    </location>
</feature>
<feature type="binding site" evidence="1">
    <location>
        <begin position="36"/>
        <end position="38"/>
    </location>
    <ligand>
        <name>substrate</name>
    </ligand>
</feature>
<feature type="binding site" evidence="1">
    <location>
        <position position="36"/>
    </location>
    <ligand>
        <name>Mg(2+)</name>
        <dbReference type="ChEBI" id="CHEBI:18420"/>
    </ligand>
</feature>
<feature type="binding site" evidence="1">
    <location>
        <position position="38"/>
    </location>
    <ligand>
        <name>Mg(2+)</name>
        <dbReference type="ChEBI" id="CHEBI:18420"/>
    </ligand>
</feature>
<feature type="binding site" evidence="1">
    <location>
        <begin position="44"/>
        <end position="47"/>
    </location>
    <ligand>
        <name>substrate</name>
    </ligand>
</feature>
<feature type="binding site" evidence="1">
    <location>
        <begin position="78"/>
        <end position="81"/>
    </location>
    <ligand>
        <name>substrate</name>
    </ligand>
</feature>
<feature type="binding site" evidence="1">
    <location>
        <begin position="135"/>
        <end position="136"/>
    </location>
    <ligand>
        <name>substrate</name>
    </ligand>
</feature>
<feature type="binding site" evidence="1">
    <location>
        <position position="161"/>
    </location>
    <ligand>
        <name>Mg(2+)</name>
        <dbReference type="ChEBI" id="CHEBI:18420"/>
    </ligand>
</feature>
<feature type="binding site" evidence="1">
    <location>
        <position position="162"/>
    </location>
    <ligand>
        <name>Mg(2+)</name>
        <dbReference type="ChEBI" id="CHEBI:18420"/>
    </ligand>
</feature>
<feature type="binding site" evidence="1">
    <location>
        <position position="162"/>
    </location>
    <ligand>
        <name>substrate</name>
    </ligand>
</feature>
<feature type="site" description="Stabilizes the phosphoryl group" evidence="1">
    <location>
        <position position="78"/>
    </location>
</feature>
<feature type="site" description="Contributes to substrate recognition" evidence="1">
    <location>
        <position position="135"/>
    </location>
</feature>
<feature type="site" description="Stabilizes the phosphoryl group" evidence="1">
    <location>
        <position position="136"/>
    </location>
</feature>
<feature type="strand" evidence="4">
    <location>
        <begin position="11"/>
        <end position="13"/>
    </location>
</feature>
<feature type="strand" evidence="4">
    <location>
        <begin position="16"/>
        <end position="20"/>
    </location>
</feature>
<feature type="strand" evidence="4">
    <location>
        <begin position="33"/>
        <end position="35"/>
    </location>
</feature>
<feature type="turn" evidence="4">
    <location>
        <begin position="39"/>
        <end position="41"/>
    </location>
</feature>
<feature type="helix" evidence="4">
    <location>
        <begin position="51"/>
        <end position="53"/>
    </location>
</feature>
<feature type="helix" evidence="4">
    <location>
        <begin position="58"/>
        <end position="60"/>
    </location>
</feature>
<feature type="helix" evidence="4">
    <location>
        <begin position="61"/>
        <end position="70"/>
    </location>
</feature>
<feature type="strand" evidence="4">
    <location>
        <begin position="74"/>
        <end position="79"/>
    </location>
</feature>
<feature type="helix" evidence="4">
    <location>
        <begin position="81"/>
        <end position="84"/>
    </location>
</feature>
<feature type="helix" evidence="4">
    <location>
        <begin position="90"/>
        <end position="106"/>
    </location>
</feature>
<feature type="strand" evidence="4">
    <location>
        <begin position="112"/>
        <end position="117"/>
    </location>
</feature>
<feature type="helix" evidence="4">
    <location>
        <begin position="140"/>
        <end position="149"/>
    </location>
</feature>
<feature type="helix" evidence="4">
    <location>
        <begin position="153"/>
        <end position="155"/>
    </location>
</feature>
<feature type="strand" evidence="4">
    <location>
        <begin position="157"/>
        <end position="162"/>
    </location>
</feature>
<feature type="helix" evidence="4">
    <location>
        <begin position="163"/>
        <end position="171"/>
    </location>
</feature>
<feature type="strand" evidence="4">
    <location>
        <begin position="175"/>
        <end position="180"/>
    </location>
</feature>
<feature type="strand" evidence="4">
    <location>
        <begin position="185"/>
        <end position="187"/>
    </location>
</feature>
<feature type="strand" evidence="4">
    <location>
        <begin position="190"/>
        <end position="197"/>
    </location>
</feature>
<feature type="helix" evidence="4">
    <location>
        <begin position="198"/>
        <end position="210"/>
    </location>
</feature>
<protein>
    <recommendedName>
        <fullName>D-glycero-beta-D-manno-heptose-1,7-bisphosphate 7-phosphatase</fullName>
        <ecNumber>3.1.3.82</ecNumber>
    </recommendedName>
    <alternativeName>
        <fullName>D,D-heptose 1,7-bisphosphate phosphatase</fullName>
        <shortName>HBP phosphatase</shortName>
    </alternativeName>
</protein>
<reference key="1">
    <citation type="journal article" date="2000" name="DNA Res.">
        <title>Complete genome structure of the nitrogen-fixing symbiotic bacterium Mesorhizobium loti.</title>
        <authorList>
            <person name="Kaneko T."/>
            <person name="Nakamura Y."/>
            <person name="Sato S."/>
            <person name="Asamizu E."/>
            <person name="Kato T."/>
            <person name="Sasamoto S."/>
            <person name="Watanabe A."/>
            <person name="Idesawa K."/>
            <person name="Ishikawa A."/>
            <person name="Kawashima K."/>
            <person name="Kimura T."/>
            <person name="Kishida Y."/>
            <person name="Kiyokawa C."/>
            <person name="Kohara M."/>
            <person name="Matsumoto M."/>
            <person name="Matsuno A."/>
            <person name="Mochizuki Y."/>
            <person name="Nakayama S."/>
            <person name="Nakazaki N."/>
            <person name="Shimpo S."/>
            <person name="Sugimoto M."/>
            <person name="Takeuchi C."/>
            <person name="Yamada M."/>
            <person name="Tabata S."/>
        </authorList>
    </citation>
    <scope>NUCLEOTIDE SEQUENCE [LARGE SCALE GENOMIC DNA]</scope>
    <source>
        <strain>LMG 29417 / CECT 9101 / MAFF 303099</strain>
    </source>
</reference>
<reference key="2">
    <citation type="journal article" date="2010" name="Biochemistry">
        <title>Divergence of biochemical function in the HAD superfamily: D-glycero-D-manno-heptose-1,7-bisphosphate phosphatase (GmhB).</title>
        <authorList>
            <person name="Wang L."/>
            <person name="Huang H."/>
            <person name="Nguyen H.H."/>
            <person name="Allen K.N."/>
            <person name="Mariano P.S."/>
            <person name="Dunaway-Mariano D."/>
        </authorList>
    </citation>
    <scope>FUNCTION</scope>
    <scope>CATALYTIC ACTIVITY</scope>
    <scope>SUBSTRATE SPECIFICITY</scope>
    <scope>KINETIC PARAMETERS</scope>
</reference>
<reference key="3">
    <citation type="submission" date="2011-07" db="PDB data bank">
        <title>Crystal structure of hypothetical protein (NP_103874.1) from Mesorhizobium loti at 1.50 A resolution.</title>
        <authorList>
            <consortium name="Joint Center for Structural Genomics (JCSG)"/>
        </authorList>
    </citation>
    <scope>X-RAY CRYSTALLOGRAPHY (1.50 ANGSTROMS)</scope>
</reference>
<gene>
    <name type="primary">gmhB</name>
    <name type="ordered locus">mll2559</name>
</gene>
<evidence type="ECO:0000250" key="1"/>
<evidence type="ECO:0000269" key="2">
    <source>
    </source>
</evidence>
<evidence type="ECO:0000305" key="3"/>
<evidence type="ECO:0007829" key="4">
    <source>
        <dbReference type="PDB" id="2O2X"/>
    </source>
</evidence>
<proteinExistence type="evidence at protein level"/>
<keyword id="KW-0002">3D-structure</keyword>
<keyword id="KW-0119">Carbohydrate metabolism</keyword>
<keyword id="KW-0963">Cytoplasm</keyword>
<keyword id="KW-0378">Hydrolase</keyword>
<keyword id="KW-0460">Magnesium</keyword>
<keyword id="KW-0479">Metal-binding</keyword>
<name>GMHBB_RHILO</name>
<comment type="function">
    <text evidence="2">Converts the D-glycero-beta-D-manno-heptose 1,7-bisphosphate (beta-HBP) intermediate into D-glycero-beta-D-manno-heptose 1-phosphate by removing the phosphate group at the C-7 position.</text>
</comment>
<comment type="catalytic activity">
    <reaction evidence="2">
        <text>D-glycero-beta-D-manno-heptose 1,7-bisphosphate + H2O = D-glycero-beta-D-manno-heptose 1-phosphate + phosphate</text>
        <dbReference type="Rhea" id="RHEA:28518"/>
        <dbReference type="ChEBI" id="CHEBI:15377"/>
        <dbReference type="ChEBI" id="CHEBI:43474"/>
        <dbReference type="ChEBI" id="CHEBI:60208"/>
        <dbReference type="ChEBI" id="CHEBI:61593"/>
        <dbReference type="EC" id="3.1.3.82"/>
    </reaction>
</comment>
<comment type="cofactor">
    <cofactor evidence="1">
        <name>Mg(2+)</name>
        <dbReference type="ChEBI" id="CHEBI:18420"/>
    </cofactor>
</comment>
<comment type="biophysicochemical properties">
    <kinetics>
        <KM evidence="2">13 uM for beta-HBP (at pH 7.5 and 25 degrees Celsius)</KM>
        <KM evidence="2">58 uM for alpha-HBP (at pH 7.5 and 25 degrees Celsius)</KM>
        <text evidence="2">kcat is 18 sec(-1) and 4.4 sec(-1) with beta-HBP and alpha-HBP as substrate, respectively. Thus, the enzyme displays 18-fold more efficiency towards the beta- than the alpha-anomer (PubMed:20050615).</text>
    </kinetics>
</comment>
<comment type="pathway">
    <text>Nucleotide-sugar biosynthesis; ADP-L-glycero-beta-D-manno-heptose biosynthesis; ADP-L-glycero-beta-D-manno-heptose from D-glycero-beta-D-manno-heptose 7-phosphate: step 2/4.</text>
</comment>
<comment type="subunit">
    <text evidence="1">Monomer.</text>
</comment>
<comment type="subcellular location">
    <subcellularLocation>
        <location evidence="1">Cytoplasm</location>
    </subcellularLocation>
</comment>
<comment type="similarity">
    <text evidence="3">Belongs to the gmhB family.</text>
</comment>
<sequence length="217" mass="23200">MADKTGTPHPLTEPGVWIERIGGRVFPPHLPALFLDRDGTINVDTDYPSDPAEIVLRPQMLPAIATANRAGIPVVVVTNQSGIARGYFGWSAFAAVNGRVLELLREEGVFVDMVLACAYHEAGVGPLAIPDHPMRKPNPGMLVEAGKRLALDLQRSLIVGDKLADMQAGKRAGLAQGWLVDGEAAVQPGFAIRPLRDSSELGDLLAAIETLGRDNRS</sequence>
<accession>Q98I56</accession>
<dbReference type="EC" id="3.1.3.82"/>
<dbReference type="EMBL" id="BA000012">
    <property type="protein sequence ID" value="BAB49660.1"/>
    <property type="molecule type" value="Genomic_DNA"/>
</dbReference>
<dbReference type="RefSeq" id="WP_010911012.1">
    <property type="nucleotide sequence ID" value="NC_002678.2"/>
</dbReference>
<dbReference type="PDB" id="2O2X">
    <property type="method" value="X-ray"/>
    <property type="resolution" value="1.50 A"/>
    <property type="chains" value="A=1-217"/>
</dbReference>
<dbReference type="PDBsum" id="2O2X"/>
<dbReference type="SMR" id="Q98I56"/>
<dbReference type="DNASU" id="1226535"/>
<dbReference type="KEGG" id="mlo:mll2559"/>
<dbReference type="PATRIC" id="fig|266835.9.peg.2054"/>
<dbReference type="eggNOG" id="COG0241">
    <property type="taxonomic scope" value="Bacteria"/>
</dbReference>
<dbReference type="HOGENOM" id="CLU_085077_3_1_5"/>
<dbReference type="BRENDA" id="3.1.3.82">
    <property type="organism ID" value="3243"/>
</dbReference>
<dbReference type="UniPathway" id="UPA00356">
    <property type="reaction ID" value="UER00438"/>
</dbReference>
<dbReference type="EvolutionaryTrace" id="Q98I56"/>
<dbReference type="Proteomes" id="UP000000552">
    <property type="component" value="Chromosome"/>
</dbReference>
<dbReference type="GO" id="GO:0005737">
    <property type="term" value="C:cytoplasm"/>
    <property type="evidence" value="ECO:0007669"/>
    <property type="project" value="UniProtKB-SubCell"/>
</dbReference>
<dbReference type="GO" id="GO:0034200">
    <property type="term" value="F:D-glycero-beta-D-manno-heptose 1,7-bisphosphate 7-phosphatase activity"/>
    <property type="evidence" value="ECO:0007669"/>
    <property type="project" value="UniProtKB-EC"/>
</dbReference>
<dbReference type="GO" id="GO:0046872">
    <property type="term" value="F:metal ion binding"/>
    <property type="evidence" value="ECO:0007669"/>
    <property type="project" value="UniProtKB-KW"/>
</dbReference>
<dbReference type="GO" id="GO:0097171">
    <property type="term" value="P:ADP-L-glycero-beta-D-manno-heptose biosynthetic process"/>
    <property type="evidence" value="ECO:0007669"/>
    <property type="project" value="UniProtKB-UniPathway"/>
</dbReference>
<dbReference type="GO" id="GO:0005975">
    <property type="term" value="P:carbohydrate metabolic process"/>
    <property type="evidence" value="ECO:0007669"/>
    <property type="project" value="InterPro"/>
</dbReference>
<dbReference type="CDD" id="cd07503">
    <property type="entry name" value="HAD_HisB-N"/>
    <property type="match status" value="1"/>
</dbReference>
<dbReference type="Gene3D" id="3.40.50.1000">
    <property type="entry name" value="HAD superfamily/HAD-like"/>
    <property type="match status" value="1"/>
</dbReference>
<dbReference type="InterPro" id="IPR036412">
    <property type="entry name" value="HAD-like_sf"/>
</dbReference>
<dbReference type="InterPro" id="IPR006549">
    <property type="entry name" value="HAD-SF_hydro_IIIA"/>
</dbReference>
<dbReference type="InterPro" id="IPR023214">
    <property type="entry name" value="HAD_sf"/>
</dbReference>
<dbReference type="InterPro" id="IPR004446">
    <property type="entry name" value="Heptose_bisP_phosphatase"/>
</dbReference>
<dbReference type="InterPro" id="IPR006543">
    <property type="entry name" value="Histidinol-phos"/>
</dbReference>
<dbReference type="NCBIfam" id="TIGR01662">
    <property type="entry name" value="HAD-SF-IIIA"/>
    <property type="match status" value="1"/>
</dbReference>
<dbReference type="NCBIfam" id="TIGR01656">
    <property type="entry name" value="Histidinol-ppas"/>
    <property type="match status" value="1"/>
</dbReference>
<dbReference type="PANTHER" id="PTHR42891">
    <property type="entry name" value="D-GLYCERO-BETA-D-MANNO-HEPTOSE-1,7-BISPHOSPHATE 7-PHOSPHATASE"/>
    <property type="match status" value="1"/>
</dbReference>
<dbReference type="PANTHER" id="PTHR42891:SF1">
    <property type="entry name" value="D-GLYCERO-BETA-D-MANNO-HEPTOSE-1,7-BISPHOSPHATE 7-PHOSPHATASE"/>
    <property type="match status" value="1"/>
</dbReference>
<dbReference type="Pfam" id="PF13242">
    <property type="entry name" value="Hydrolase_like"/>
    <property type="match status" value="1"/>
</dbReference>
<dbReference type="PIRSF" id="PIRSF004682">
    <property type="entry name" value="GmhB"/>
    <property type="match status" value="1"/>
</dbReference>
<dbReference type="SFLD" id="SFLDG01134">
    <property type="entry name" value="C1.5.5:_Heptose_Bisphosphate_P"/>
    <property type="match status" value="1"/>
</dbReference>
<dbReference type="SFLD" id="SFLDG01129">
    <property type="entry name" value="C1.5:_HAD__Beta-PGM__Phosphata"/>
    <property type="match status" value="1"/>
</dbReference>
<dbReference type="SUPFAM" id="SSF56784">
    <property type="entry name" value="HAD-like"/>
    <property type="match status" value="1"/>
</dbReference>
<organism>
    <name type="scientific">Mesorhizobium japonicum (strain LMG 29417 / CECT 9101 / MAFF 303099)</name>
    <name type="common">Mesorhizobium loti (strain MAFF 303099)</name>
    <dbReference type="NCBI Taxonomy" id="266835"/>
    <lineage>
        <taxon>Bacteria</taxon>
        <taxon>Pseudomonadati</taxon>
        <taxon>Pseudomonadota</taxon>
        <taxon>Alphaproteobacteria</taxon>
        <taxon>Hyphomicrobiales</taxon>
        <taxon>Phyllobacteriaceae</taxon>
        <taxon>Mesorhizobium</taxon>
    </lineage>
</organism>